<feature type="chain" id="PRO_1000096982" description="3-methyl-2-oxobutanoate hydroxymethyltransferase">
    <location>
        <begin position="1"/>
        <end position="275"/>
    </location>
</feature>
<feature type="active site" description="Proton acceptor" evidence="1">
    <location>
        <position position="191"/>
    </location>
</feature>
<feature type="binding site" evidence="1">
    <location>
        <begin position="55"/>
        <end position="56"/>
    </location>
    <ligand>
        <name>3-methyl-2-oxobutanoate</name>
        <dbReference type="ChEBI" id="CHEBI:11851"/>
    </ligand>
</feature>
<feature type="binding site" evidence="1">
    <location>
        <position position="55"/>
    </location>
    <ligand>
        <name>Mg(2+)</name>
        <dbReference type="ChEBI" id="CHEBI:18420"/>
    </ligand>
</feature>
<feature type="binding site" evidence="1">
    <location>
        <position position="94"/>
    </location>
    <ligand>
        <name>3-methyl-2-oxobutanoate</name>
        <dbReference type="ChEBI" id="CHEBI:11851"/>
    </ligand>
</feature>
<feature type="binding site" evidence="1">
    <location>
        <position position="94"/>
    </location>
    <ligand>
        <name>Mg(2+)</name>
        <dbReference type="ChEBI" id="CHEBI:18420"/>
    </ligand>
</feature>
<feature type="binding site" evidence="1">
    <location>
        <position position="122"/>
    </location>
    <ligand>
        <name>3-methyl-2-oxobutanoate</name>
        <dbReference type="ChEBI" id="CHEBI:11851"/>
    </ligand>
</feature>
<feature type="binding site" evidence="1">
    <location>
        <position position="124"/>
    </location>
    <ligand>
        <name>Mg(2+)</name>
        <dbReference type="ChEBI" id="CHEBI:18420"/>
    </ligand>
</feature>
<proteinExistence type="inferred from homology"/>
<comment type="function">
    <text evidence="1">Catalyzes the reversible reaction in which hydroxymethyl group from 5,10-methylenetetrahydrofolate is transferred onto alpha-ketoisovalerate to form ketopantoate.</text>
</comment>
<comment type="catalytic activity">
    <reaction evidence="1">
        <text>3-methyl-2-oxobutanoate + (6R)-5,10-methylene-5,6,7,8-tetrahydrofolate + H2O = 2-dehydropantoate + (6S)-5,6,7,8-tetrahydrofolate</text>
        <dbReference type="Rhea" id="RHEA:11824"/>
        <dbReference type="ChEBI" id="CHEBI:11561"/>
        <dbReference type="ChEBI" id="CHEBI:11851"/>
        <dbReference type="ChEBI" id="CHEBI:15377"/>
        <dbReference type="ChEBI" id="CHEBI:15636"/>
        <dbReference type="ChEBI" id="CHEBI:57453"/>
        <dbReference type="EC" id="2.1.2.11"/>
    </reaction>
</comment>
<comment type="cofactor">
    <cofactor evidence="1">
        <name>Mg(2+)</name>
        <dbReference type="ChEBI" id="CHEBI:18420"/>
    </cofactor>
    <text evidence="1">Binds 1 Mg(2+) ion per subunit.</text>
</comment>
<comment type="pathway">
    <text evidence="1">Cofactor biosynthesis; (R)-pantothenate biosynthesis; (R)-pantoate from 3-methyl-2-oxobutanoate: step 1/2.</text>
</comment>
<comment type="subunit">
    <text evidence="1">Homodecamer; pentamer of dimers.</text>
</comment>
<comment type="subcellular location">
    <subcellularLocation>
        <location evidence="1">Cytoplasm</location>
    </subcellularLocation>
</comment>
<comment type="similarity">
    <text evidence="1">Belongs to the PanB family.</text>
</comment>
<protein>
    <recommendedName>
        <fullName evidence="1">3-methyl-2-oxobutanoate hydroxymethyltransferase</fullName>
        <ecNumber evidence="1">2.1.2.11</ecNumber>
    </recommendedName>
    <alternativeName>
        <fullName evidence="1">Ketopantoate hydroxymethyltransferase</fullName>
        <shortName evidence="1">KPHMT</shortName>
    </alternativeName>
</protein>
<sequence>MYSDNSQRKLTKAVTLSTLKKMKADKEKITCLTSYDASFTNVMNVAGVETILVGDSLGMVIQGQDSTLPVTIEDMCYHTAAVKRGNTNAFILADMSFMSYSKPEQALDNAAKLMQAGANMVKLEGGSWLADTIKLLSQRGIPVCAHLGLTPQSVHKFGGYKVQGKSQDAADLLLQESLDLVAAGADILLYECIPTELGKTLTDAVPVPTIGIGAGHHTDGQVLVMHDMLGINLGHTPKFVKNFLTEGRNVTEAFEAYVKEVKDMTFPGPEHGFKS</sequence>
<reference key="1">
    <citation type="submission" date="2007-06" db="EMBL/GenBank/DDBJ databases">
        <title>Complete sequence of Marinomonas sp. MWYL1.</title>
        <authorList>
            <consortium name="US DOE Joint Genome Institute"/>
            <person name="Copeland A."/>
            <person name="Lucas S."/>
            <person name="Lapidus A."/>
            <person name="Barry K."/>
            <person name="Glavina del Rio T."/>
            <person name="Dalin E."/>
            <person name="Tice H."/>
            <person name="Pitluck S."/>
            <person name="Kiss H."/>
            <person name="Brettin T."/>
            <person name="Bruce D."/>
            <person name="Detter J.C."/>
            <person name="Han C."/>
            <person name="Schmutz J."/>
            <person name="Larimer F."/>
            <person name="Land M."/>
            <person name="Hauser L."/>
            <person name="Kyrpides N."/>
            <person name="Kim E."/>
            <person name="Johnston A.W.B."/>
            <person name="Todd J.D."/>
            <person name="Rogers R."/>
            <person name="Wexler M."/>
            <person name="Bond P.L."/>
            <person name="Li Y."/>
            <person name="Richardson P."/>
        </authorList>
    </citation>
    <scope>NUCLEOTIDE SEQUENCE [LARGE SCALE GENOMIC DNA]</scope>
    <source>
        <strain>MWYL1</strain>
    </source>
</reference>
<name>PANB_MARMS</name>
<keyword id="KW-0963">Cytoplasm</keyword>
<keyword id="KW-0460">Magnesium</keyword>
<keyword id="KW-0479">Metal-binding</keyword>
<keyword id="KW-0566">Pantothenate biosynthesis</keyword>
<keyword id="KW-0808">Transferase</keyword>
<gene>
    <name evidence="1" type="primary">panB</name>
    <name type="ordered locus">Mmwyl1_4016</name>
</gene>
<dbReference type="EC" id="2.1.2.11" evidence="1"/>
<dbReference type="EMBL" id="CP000749">
    <property type="protein sequence ID" value="ABR72912.1"/>
    <property type="molecule type" value="Genomic_DNA"/>
</dbReference>
<dbReference type="SMR" id="A6W2I3"/>
<dbReference type="STRING" id="400668.Mmwyl1_4016"/>
<dbReference type="KEGG" id="mmw:Mmwyl1_4016"/>
<dbReference type="eggNOG" id="COG0413">
    <property type="taxonomic scope" value="Bacteria"/>
</dbReference>
<dbReference type="HOGENOM" id="CLU_036645_1_0_6"/>
<dbReference type="OrthoDB" id="9781789at2"/>
<dbReference type="UniPathway" id="UPA00028">
    <property type="reaction ID" value="UER00003"/>
</dbReference>
<dbReference type="GO" id="GO:0005737">
    <property type="term" value="C:cytoplasm"/>
    <property type="evidence" value="ECO:0007669"/>
    <property type="project" value="UniProtKB-SubCell"/>
</dbReference>
<dbReference type="GO" id="GO:0003864">
    <property type="term" value="F:3-methyl-2-oxobutanoate hydroxymethyltransferase activity"/>
    <property type="evidence" value="ECO:0007669"/>
    <property type="project" value="UniProtKB-UniRule"/>
</dbReference>
<dbReference type="GO" id="GO:0000287">
    <property type="term" value="F:magnesium ion binding"/>
    <property type="evidence" value="ECO:0007669"/>
    <property type="project" value="TreeGrafter"/>
</dbReference>
<dbReference type="GO" id="GO:0015940">
    <property type="term" value="P:pantothenate biosynthetic process"/>
    <property type="evidence" value="ECO:0007669"/>
    <property type="project" value="UniProtKB-UniRule"/>
</dbReference>
<dbReference type="CDD" id="cd06557">
    <property type="entry name" value="KPHMT-like"/>
    <property type="match status" value="1"/>
</dbReference>
<dbReference type="FunFam" id="3.20.20.60:FF:000003">
    <property type="entry name" value="3-methyl-2-oxobutanoate hydroxymethyltransferase"/>
    <property type="match status" value="1"/>
</dbReference>
<dbReference type="Gene3D" id="3.20.20.60">
    <property type="entry name" value="Phosphoenolpyruvate-binding domains"/>
    <property type="match status" value="1"/>
</dbReference>
<dbReference type="HAMAP" id="MF_00156">
    <property type="entry name" value="PanB"/>
    <property type="match status" value="1"/>
</dbReference>
<dbReference type="InterPro" id="IPR003700">
    <property type="entry name" value="Pantoate_hydroxy_MeTrfase"/>
</dbReference>
<dbReference type="InterPro" id="IPR015813">
    <property type="entry name" value="Pyrv/PenolPyrv_kinase-like_dom"/>
</dbReference>
<dbReference type="InterPro" id="IPR040442">
    <property type="entry name" value="Pyrv_kinase-like_dom_sf"/>
</dbReference>
<dbReference type="NCBIfam" id="TIGR00222">
    <property type="entry name" value="panB"/>
    <property type="match status" value="1"/>
</dbReference>
<dbReference type="NCBIfam" id="NF001452">
    <property type="entry name" value="PRK00311.1"/>
    <property type="match status" value="1"/>
</dbReference>
<dbReference type="PANTHER" id="PTHR20881">
    <property type="entry name" value="3-METHYL-2-OXOBUTANOATE HYDROXYMETHYLTRANSFERASE"/>
    <property type="match status" value="1"/>
</dbReference>
<dbReference type="PANTHER" id="PTHR20881:SF0">
    <property type="entry name" value="3-METHYL-2-OXOBUTANOATE HYDROXYMETHYLTRANSFERASE"/>
    <property type="match status" value="1"/>
</dbReference>
<dbReference type="Pfam" id="PF02548">
    <property type="entry name" value="Pantoate_transf"/>
    <property type="match status" value="1"/>
</dbReference>
<dbReference type="PIRSF" id="PIRSF000388">
    <property type="entry name" value="Pantoate_hydroxy_MeTrfase"/>
    <property type="match status" value="1"/>
</dbReference>
<dbReference type="SUPFAM" id="SSF51621">
    <property type="entry name" value="Phosphoenolpyruvate/pyruvate domain"/>
    <property type="match status" value="1"/>
</dbReference>
<evidence type="ECO:0000255" key="1">
    <source>
        <dbReference type="HAMAP-Rule" id="MF_00156"/>
    </source>
</evidence>
<organism>
    <name type="scientific">Marinomonas sp. (strain MWYL1)</name>
    <dbReference type="NCBI Taxonomy" id="400668"/>
    <lineage>
        <taxon>Bacteria</taxon>
        <taxon>Pseudomonadati</taxon>
        <taxon>Pseudomonadota</taxon>
        <taxon>Gammaproteobacteria</taxon>
        <taxon>Oceanospirillales</taxon>
        <taxon>Oceanospirillaceae</taxon>
        <taxon>Marinomonas</taxon>
    </lineage>
</organism>
<accession>A6W2I3</accession>